<organism>
    <name type="scientific">Helicobacter pylori (strain Shi470)</name>
    <dbReference type="NCBI Taxonomy" id="512562"/>
    <lineage>
        <taxon>Bacteria</taxon>
        <taxon>Pseudomonadati</taxon>
        <taxon>Campylobacterota</taxon>
        <taxon>Epsilonproteobacteria</taxon>
        <taxon>Campylobacterales</taxon>
        <taxon>Helicobacteraceae</taxon>
        <taxon>Helicobacter</taxon>
    </lineage>
</organism>
<evidence type="ECO:0000255" key="1">
    <source>
        <dbReference type="HAMAP-Rule" id="MF_00086"/>
    </source>
</evidence>
<dbReference type="EC" id="2.5.1.6" evidence="1"/>
<dbReference type="EMBL" id="CP001072">
    <property type="protein sequence ID" value="ACD47659.1"/>
    <property type="molecule type" value="Genomic_DNA"/>
</dbReference>
<dbReference type="RefSeq" id="WP_000655119.1">
    <property type="nucleotide sequence ID" value="NC_010698.2"/>
</dbReference>
<dbReference type="SMR" id="B2US27"/>
<dbReference type="KEGG" id="hps:HPSH_01010"/>
<dbReference type="HOGENOM" id="CLU_041802_1_1_7"/>
<dbReference type="UniPathway" id="UPA00315">
    <property type="reaction ID" value="UER00080"/>
</dbReference>
<dbReference type="GO" id="GO:0005737">
    <property type="term" value="C:cytoplasm"/>
    <property type="evidence" value="ECO:0007669"/>
    <property type="project" value="UniProtKB-SubCell"/>
</dbReference>
<dbReference type="GO" id="GO:0005524">
    <property type="term" value="F:ATP binding"/>
    <property type="evidence" value="ECO:0007669"/>
    <property type="project" value="UniProtKB-UniRule"/>
</dbReference>
<dbReference type="GO" id="GO:0000287">
    <property type="term" value="F:magnesium ion binding"/>
    <property type="evidence" value="ECO:0007669"/>
    <property type="project" value="UniProtKB-UniRule"/>
</dbReference>
<dbReference type="GO" id="GO:0004478">
    <property type="term" value="F:methionine adenosyltransferase activity"/>
    <property type="evidence" value="ECO:0007669"/>
    <property type="project" value="UniProtKB-UniRule"/>
</dbReference>
<dbReference type="GO" id="GO:0006730">
    <property type="term" value="P:one-carbon metabolic process"/>
    <property type="evidence" value="ECO:0007669"/>
    <property type="project" value="UniProtKB-KW"/>
</dbReference>
<dbReference type="GO" id="GO:0006556">
    <property type="term" value="P:S-adenosylmethionine biosynthetic process"/>
    <property type="evidence" value="ECO:0007669"/>
    <property type="project" value="UniProtKB-UniRule"/>
</dbReference>
<dbReference type="CDD" id="cd18079">
    <property type="entry name" value="S-AdoMet_synt"/>
    <property type="match status" value="1"/>
</dbReference>
<dbReference type="FunFam" id="3.30.300.10:FF:000003">
    <property type="entry name" value="S-adenosylmethionine synthase"/>
    <property type="match status" value="1"/>
</dbReference>
<dbReference type="Gene3D" id="3.30.300.10">
    <property type="match status" value="3"/>
</dbReference>
<dbReference type="HAMAP" id="MF_00086">
    <property type="entry name" value="S_AdoMet_synth1"/>
    <property type="match status" value="1"/>
</dbReference>
<dbReference type="InterPro" id="IPR022631">
    <property type="entry name" value="ADOMET_SYNTHASE_CS"/>
</dbReference>
<dbReference type="InterPro" id="IPR022630">
    <property type="entry name" value="S-AdoMet_synt_C"/>
</dbReference>
<dbReference type="InterPro" id="IPR022629">
    <property type="entry name" value="S-AdoMet_synt_central"/>
</dbReference>
<dbReference type="InterPro" id="IPR022628">
    <property type="entry name" value="S-AdoMet_synt_N"/>
</dbReference>
<dbReference type="InterPro" id="IPR002133">
    <property type="entry name" value="S-AdoMet_synthetase"/>
</dbReference>
<dbReference type="InterPro" id="IPR022636">
    <property type="entry name" value="S-AdoMet_synthetase_sfam"/>
</dbReference>
<dbReference type="NCBIfam" id="TIGR01034">
    <property type="entry name" value="metK"/>
    <property type="match status" value="1"/>
</dbReference>
<dbReference type="PANTHER" id="PTHR11964">
    <property type="entry name" value="S-ADENOSYLMETHIONINE SYNTHETASE"/>
    <property type="match status" value="1"/>
</dbReference>
<dbReference type="Pfam" id="PF02773">
    <property type="entry name" value="S-AdoMet_synt_C"/>
    <property type="match status" value="1"/>
</dbReference>
<dbReference type="Pfam" id="PF02772">
    <property type="entry name" value="S-AdoMet_synt_M"/>
    <property type="match status" value="1"/>
</dbReference>
<dbReference type="Pfam" id="PF00438">
    <property type="entry name" value="S-AdoMet_synt_N"/>
    <property type="match status" value="1"/>
</dbReference>
<dbReference type="PIRSF" id="PIRSF000497">
    <property type="entry name" value="MAT"/>
    <property type="match status" value="1"/>
</dbReference>
<dbReference type="SUPFAM" id="SSF55973">
    <property type="entry name" value="S-adenosylmethionine synthetase"/>
    <property type="match status" value="3"/>
</dbReference>
<dbReference type="PROSITE" id="PS00376">
    <property type="entry name" value="ADOMET_SYNTHASE_1"/>
    <property type="match status" value="1"/>
</dbReference>
<dbReference type="PROSITE" id="PS00377">
    <property type="entry name" value="ADOMET_SYNTHASE_2"/>
    <property type="match status" value="1"/>
</dbReference>
<name>METK_HELPS</name>
<protein>
    <recommendedName>
        <fullName evidence="1">S-adenosylmethionine synthase</fullName>
        <shortName evidence="1">AdoMet synthase</shortName>
        <ecNumber evidence="1">2.5.1.6</ecNumber>
    </recommendedName>
    <alternativeName>
        <fullName evidence="1">MAT</fullName>
    </alternativeName>
    <alternativeName>
        <fullName evidence="1">Methionine adenosyltransferase</fullName>
    </alternativeName>
</protein>
<sequence>MKDSFLFTSESVTEGHPDKMADQISDAVLDYIIERDQKAKVACETLVANGFCMITGELKTSVYAPMQEIAREVVKKIGYTDALYGFDYRSAAVLNGVGEQSPDINQGVDREDGEIGAGDQGLMFGYACKETETLMPLPIHLAHQLTFALAQKRKDNTLPFLRPDGKSQVSVRYENNKPVSIDTIVISTQHSPEVSQKHLKESVIEEIVYKVLPKEYLHDNIKFFVNPTGKFVIGGPQGDAGLTGRKIIVDTYGGSCPHGGGAFSGKDPSKVDRSAAYAARYVAKNLVASGVCDKATVQLAYAIGVIEPVSVYVNTHNTSKYSSAELEKCVKSVFKLTPKGIIESLDLLRPIYSLTSAYGHFGRELEEFTWEKTNKAEEIQAFFKR</sequence>
<accession>B2US27</accession>
<gene>
    <name evidence="1" type="primary">metK</name>
    <name type="ordered locus">HPSH_01010</name>
</gene>
<proteinExistence type="inferred from homology"/>
<comment type="function">
    <text evidence="1">Catalyzes the formation of S-adenosylmethionine (AdoMet) from methionine and ATP. The overall synthetic reaction is composed of two sequential steps, AdoMet formation and the subsequent tripolyphosphate hydrolysis which occurs prior to release of AdoMet from the enzyme.</text>
</comment>
<comment type="catalytic activity">
    <reaction evidence="1">
        <text>L-methionine + ATP + H2O = S-adenosyl-L-methionine + phosphate + diphosphate</text>
        <dbReference type="Rhea" id="RHEA:21080"/>
        <dbReference type="ChEBI" id="CHEBI:15377"/>
        <dbReference type="ChEBI" id="CHEBI:30616"/>
        <dbReference type="ChEBI" id="CHEBI:33019"/>
        <dbReference type="ChEBI" id="CHEBI:43474"/>
        <dbReference type="ChEBI" id="CHEBI:57844"/>
        <dbReference type="ChEBI" id="CHEBI:59789"/>
        <dbReference type="EC" id="2.5.1.6"/>
    </reaction>
</comment>
<comment type="cofactor">
    <cofactor evidence="1">
        <name>Mg(2+)</name>
        <dbReference type="ChEBI" id="CHEBI:18420"/>
    </cofactor>
    <text evidence="1">Binds 2 divalent ions per subunit.</text>
</comment>
<comment type="cofactor">
    <cofactor evidence="1">
        <name>K(+)</name>
        <dbReference type="ChEBI" id="CHEBI:29103"/>
    </cofactor>
    <text evidence="1">Binds 1 potassium ion per subunit.</text>
</comment>
<comment type="pathway">
    <text evidence="1">Amino-acid biosynthesis; S-adenosyl-L-methionine biosynthesis; S-adenosyl-L-methionine from L-methionine: step 1/1.</text>
</comment>
<comment type="subunit">
    <text evidence="1">Homotetramer; dimer of dimers.</text>
</comment>
<comment type="subcellular location">
    <subcellularLocation>
        <location evidence="1">Cytoplasm</location>
    </subcellularLocation>
</comment>
<comment type="similarity">
    <text evidence="1">Belongs to the AdoMet synthase family.</text>
</comment>
<feature type="chain" id="PRO_1000093054" description="S-adenosylmethionine synthase">
    <location>
        <begin position="1"/>
        <end position="385"/>
    </location>
</feature>
<feature type="region of interest" description="Flexible loop" evidence="1">
    <location>
        <begin position="100"/>
        <end position="110"/>
    </location>
</feature>
<feature type="binding site" description="in other chain" evidence="1">
    <location>
        <position position="16"/>
    </location>
    <ligand>
        <name>ATP</name>
        <dbReference type="ChEBI" id="CHEBI:30616"/>
        <note>ligand shared between two neighboring subunits</note>
    </ligand>
</feature>
<feature type="binding site" evidence="1">
    <location>
        <position position="18"/>
    </location>
    <ligand>
        <name>Mg(2+)</name>
        <dbReference type="ChEBI" id="CHEBI:18420"/>
    </ligand>
</feature>
<feature type="binding site" evidence="1">
    <location>
        <position position="44"/>
    </location>
    <ligand>
        <name>K(+)</name>
        <dbReference type="ChEBI" id="CHEBI:29103"/>
    </ligand>
</feature>
<feature type="binding site" description="in other chain" evidence="1">
    <location>
        <position position="57"/>
    </location>
    <ligand>
        <name>L-methionine</name>
        <dbReference type="ChEBI" id="CHEBI:57844"/>
        <note>ligand shared between two neighboring subunits</note>
    </ligand>
</feature>
<feature type="binding site" description="in other chain" evidence="1">
    <location>
        <position position="100"/>
    </location>
    <ligand>
        <name>L-methionine</name>
        <dbReference type="ChEBI" id="CHEBI:57844"/>
        <note>ligand shared between two neighboring subunits</note>
    </ligand>
</feature>
<feature type="binding site" description="in other chain" evidence="1">
    <location>
        <begin position="164"/>
        <end position="166"/>
    </location>
    <ligand>
        <name>ATP</name>
        <dbReference type="ChEBI" id="CHEBI:30616"/>
        <note>ligand shared between two neighboring subunits</note>
    </ligand>
</feature>
<feature type="binding site" description="in other chain" evidence="1">
    <location>
        <begin position="230"/>
        <end position="231"/>
    </location>
    <ligand>
        <name>ATP</name>
        <dbReference type="ChEBI" id="CHEBI:30616"/>
        <note>ligand shared between two neighboring subunits</note>
    </ligand>
</feature>
<feature type="binding site" evidence="1">
    <location>
        <position position="239"/>
    </location>
    <ligand>
        <name>ATP</name>
        <dbReference type="ChEBI" id="CHEBI:30616"/>
        <note>ligand shared between two neighboring subunits</note>
    </ligand>
</feature>
<feature type="binding site" evidence="1">
    <location>
        <position position="239"/>
    </location>
    <ligand>
        <name>L-methionine</name>
        <dbReference type="ChEBI" id="CHEBI:57844"/>
        <note>ligand shared between two neighboring subunits</note>
    </ligand>
</feature>
<feature type="binding site" description="in other chain" evidence="1">
    <location>
        <begin position="245"/>
        <end position="246"/>
    </location>
    <ligand>
        <name>ATP</name>
        <dbReference type="ChEBI" id="CHEBI:30616"/>
        <note>ligand shared between two neighboring subunits</note>
    </ligand>
</feature>
<feature type="binding site" evidence="1">
    <location>
        <position position="262"/>
    </location>
    <ligand>
        <name>ATP</name>
        <dbReference type="ChEBI" id="CHEBI:30616"/>
        <note>ligand shared between two neighboring subunits</note>
    </ligand>
</feature>
<feature type="binding site" evidence="1">
    <location>
        <position position="266"/>
    </location>
    <ligand>
        <name>ATP</name>
        <dbReference type="ChEBI" id="CHEBI:30616"/>
        <note>ligand shared between two neighboring subunits</note>
    </ligand>
</feature>
<feature type="binding site" description="in other chain" evidence="1">
    <location>
        <position position="270"/>
    </location>
    <ligand>
        <name>L-methionine</name>
        <dbReference type="ChEBI" id="CHEBI:57844"/>
        <note>ligand shared between two neighboring subunits</note>
    </ligand>
</feature>
<keyword id="KW-0067">ATP-binding</keyword>
<keyword id="KW-0963">Cytoplasm</keyword>
<keyword id="KW-0460">Magnesium</keyword>
<keyword id="KW-0479">Metal-binding</keyword>
<keyword id="KW-0547">Nucleotide-binding</keyword>
<keyword id="KW-0554">One-carbon metabolism</keyword>
<keyword id="KW-0630">Potassium</keyword>
<keyword id="KW-0808">Transferase</keyword>
<reference key="1">
    <citation type="submission" date="2008-05" db="EMBL/GenBank/DDBJ databases">
        <title>Genome sequence of Helicobacter pylori from the remote Amazon: traces of Asian ancestry of the first Americans.</title>
        <authorList>
            <person name="Kersulyte D."/>
            <person name="Kalia A."/>
            <person name="Gilman R.H."/>
            <person name="Berg D.E."/>
        </authorList>
    </citation>
    <scope>NUCLEOTIDE SEQUENCE [LARGE SCALE GENOMIC DNA]</scope>
    <source>
        <strain>Shi470</strain>
    </source>
</reference>